<keyword id="KW-0025">Alternative splicing</keyword>
<keyword id="KW-0597">Phosphoprotein</keyword>
<keyword id="KW-1267">Proteomics identification</keyword>
<keyword id="KW-1185">Reference proteome</keyword>
<name>RCAN2_HUMAN</name>
<gene>
    <name type="primary">RCAN2</name>
    <name type="synonym">DSCR1L1</name>
    <name type="synonym">ZAKI4</name>
</gene>
<evidence type="ECO:0000250" key="1">
    <source>
        <dbReference type="UniProtKB" id="Q9JHG2"/>
    </source>
</evidence>
<evidence type="ECO:0000256" key="2">
    <source>
        <dbReference type="SAM" id="MobiDB-lite"/>
    </source>
</evidence>
<evidence type="ECO:0000303" key="3">
    <source>
    </source>
</evidence>
<evidence type="ECO:0000303" key="4">
    <source>
    </source>
</evidence>
<evidence type="ECO:0000305" key="5"/>
<proteinExistence type="evidence at protein level"/>
<reference key="1">
    <citation type="journal article" date="1996" name="J. Biol. Chem.">
        <title>Molecular cloning of a novel thyroid hormone-responsive gene, ZAKI-4, in human skin fibroblasts.</title>
        <authorList>
            <person name="Miyazaki T."/>
            <person name="Kanou Y."/>
            <person name="Murata Y."/>
            <person name="Ohmori S."/>
            <person name="Niwa T."/>
            <person name="Maeda K."/>
            <person name="Yamamura H."/>
            <person name="Seo H."/>
        </authorList>
    </citation>
    <scope>NUCLEOTIDE SEQUENCE [MRNA] (ISOFORM 1)</scope>
    <source>
        <tissue>Fibroblast</tissue>
    </source>
</reference>
<reference key="2">
    <citation type="journal article" date="2002" name="Biochem. J.">
        <title>Novel human ZAKI-4 isoforms: hormonal and tissue-specific regulation and function as calcineurin inhibitors.</title>
        <authorList>
            <person name="Cao X."/>
            <person name="Kambe F."/>
            <person name="Miyazaki T."/>
            <person name="Sarkar D."/>
            <person name="Ohmori S."/>
            <person name="Seo H."/>
        </authorList>
    </citation>
    <scope>NUCLEOTIDE SEQUENCE [MRNA] (ISOFORM 2)</scope>
    <source>
        <tissue>Brain</tissue>
    </source>
</reference>
<reference key="3">
    <citation type="journal article" date="2004" name="Nat. Genet.">
        <title>Complete sequencing and characterization of 21,243 full-length human cDNAs.</title>
        <authorList>
            <person name="Ota T."/>
            <person name="Suzuki Y."/>
            <person name="Nishikawa T."/>
            <person name="Otsuki T."/>
            <person name="Sugiyama T."/>
            <person name="Irie R."/>
            <person name="Wakamatsu A."/>
            <person name="Hayashi K."/>
            <person name="Sato H."/>
            <person name="Nagai K."/>
            <person name="Kimura K."/>
            <person name="Makita H."/>
            <person name="Sekine M."/>
            <person name="Obayashi M."/>
            <person name="Nishi T."/>
            <person name="Shibahara T."/>
            <person name="Tanaka T."/>
            <person name="Ishii S."/>
            <person name="Yamamoto J."/>
            <person name="Saito K."/>
            <person name="Kawai Y."/>
            <person name="Isono Y."/>
            <person name="Nakamura Y."/>
            <person name="Nagahari K."/>
            <person name="Murakami K."/>
            <person name="Yasuda T."/>
            <person name="Iwayanagi T."/>
            <person name="Wagatsuma M."/>
            <person name="Shiratori A."/>
            <person name="Sudo H."/>
            <person name="Hosoiri T."/>
            <person name="Kaku Y."/>
            <person name="Kodaira H."/>
            <person name="Kondo H."/>
            <person name="Sugawara M."/>
            <person name="Takahashi M."/>
            <person name="Kanda K."/>
            <person name="Yokoi T."/>
            <person name="Furuya T."/>
            <person name="Kikkawa E."/>
            <person name="Omura Y."/>
            <person name="Abe K."/>
            <person name="Kamihara K."/>
            <person name="Katsuta N."/>
            <person name="Sato K."/>
            <person name="Tanikawa M."/>
            <person name="Yamazaki M."/>
            <person name="Ninomiya K."/>
            <person name="Ishibashi T."/>
            <person name="Yamashita H."/>
            <person name="Murakawa K."/>
            <person name="Fujimori K."/>
            <person name="Tanai H."/>
            <person name="Kimata M."/>
            <person name="Watanabe M."/>
            <person name="Hiraoka S."/>
            <person name="Chiba Y."/>
            <person name="Ishida S."/>
            <person name="Ono Y."/>
            <person name="Takiguchi S."/>
            <person name="Watanabe S."/>
            <person name="Yosida M."/>
            <person name="Hotuta T."/>
            <person name="Kusano J."/>
            <person name="Kanehori K."/>
            <person name="Takahashi-Fujii A."/>
            <person name="Hara H."/>
            <person name="Tanase T.-O."/>
            <person name="Nomura Y."/>
            <person name="Togiya S."/>
            <person name="Komai F."/>
            <person name="Hara R."/>
            <person name="Takeuchi K."/>
            <person name="Arita M."/>
            <person name="Imose N."/>
            <person name="Musashino K."/>
            <person name="Yuuki H."/>
            <person name="Oshima A."/>
            <person name="Sasaki N."/>
            <person name="Aotsuka S."/>
            <person name="Yoshikawa Y."/>
            <person name="Matsunawa H."/>
            <person name="Ichihara T."/>
            <person name="Shiohata N."/>
            <person name="Sano S."/>
            <person name="Moriya S."/>
            <person name="Momiyama H."/>
            <person name="Satoh N."/>
            <person name="Takami S."/>
            <person name="Terashima Y."/>
            <person name="Suzuki O."/>
            <person name="Nakagawa S."/>
            <person name="Senoh A."/>
            <person name="Mizoguchi H."/>
            <person name="Goto Y."/>
            <person name="Shimizu F."/>
            <person name="Wakebe H."/>
            <person name="Hishigaki H."/>
            <person name="Watanabe T."/>
            <person name="Sugiyama A."/>
            <person name="Takemoto M."/>
            <person name="Kawakami B."/>
            <person name="Yamazaki M."/>
            <person name="Watanabe K."/>
            <person name="Kumagai A."/>
            <person name="Itakura S."/>
            <person name="Fukuzumi Y."/>
            <person name="Fujimori Y."/>
            <person name="Komiyama M."/>
            <person name="Tashiro H."/>
            <person name="Tanigami A."/>
            <person name="Fujiwara T."/>
            <person name="Ono T."/>
            <person name="Yamada K."/>
            <person name="Fujii Y."/>
            <person name="Ozaki K."/>
            <person name="Hirao M."/>
            <person name="Ohmori Y."/>
            <person name="Kawabata A."/>
            <person name="Hikiji T."/>
            <person name="Kobatake N."/>
            <person name="Inagaki H."/>
            <person name="Ikema Y."/>
            <person name="Okamoto S."/>
            <person name="Okitani R."/>
            <person name="Kawakami T."/>
            <person name="Noguchi S."/>
            <person name="Itoh T."/>
            <person name="Shigeta K."/>
            <person name="Senba T."/>
            <person name="Matsumura K."/>
            <person name="Nakajima Y."/>
            <person name="Mizuno T."/>
            <person name="Morinaga M."/>
            <person name="Sasaki M."/>
            <person name="Togashi T."/>
            <person name="Oyama M."/>
            <person name="Hata H."/>
            <person name="Watanabe M."/>
            <person name="Komatsu T."/>
            <person name="Mizushima-Sugano J."/>
            <person name="Satoh T."/>
            <person name="Shirai Y."/>
            <person name="Takahashi Y."/>
            <person name="Nakagawa K."/>
            <person name="Okumura K."/>
            <person name="Nagase T."/>
            <person name="Nomura N."/>
            <person name="Kikuchi H."/>
            <person name="Masuho Y."/>
            <person name="Yamashita R."/>
            <person name="Nakai K."/>
            <person name="Yada T."/>
            <person name="Nakamura Y."/>
            <person name="Ohara O."/>
            <person name="Isogai T."/>
            <person name="Sugano S."/>
        </authorList>
    </citation>
    <scope>NUCLEOTIDE SEQUENCE [LARGE SCALE MRNA] (ISOFORM 2)</scope>
    <source>
        <tissue>Brain</tissue>
    </source>
</reference>
<reference key="4">
    <citation type="journal article" date="2003" name="Nature">
        <title>The DNA sequence and analysis of human chromosome 6.</title>
        <authorList>
            <person name="Mungall A.J."/>
            <person name="Palmer S.A."/>
            <person name="Sims S.K."/>
            <person name="Edwards C.A."/>
            <person name="Ashurst J.L."/>
            <person name="Wilming L."/>
            <person name="Jones M.C."/>
            <person name="Horton R."/>
            <person name="Hunt S.E."/>
            <person name="Scott C.E."/>
            <person name="Gilbert J.G.R."/>
            <person name="Clamp M.E."/>
            <person name="Bethel G."/>
            <person name="Milne S."/>
            <person name="Ainscough R."/>
            <person name="Almeida J.P."/>
            <person name="Ambrose K.D."/>
            <person name="Andrews T.D."/>
            <person name="Ashwell R.I.S."/>
            <person name="Babbage A.K."/>
            <person name="Bagguley C.L."/>
            <person name="Bailey J."/>
            <person name="Banerjee R."/>
            <person name="Barker D.J."/>
            <person name="Barlow K.F."/>
            <person name="Bates K."/>
            <person name="Beare D.M."/>
            <person name="Beasley H."/>
            <person name="Beasley O."/>
            <person name="Bird C.P."/>
            <person name="Blakey S.E."/>
            <person name="Bray-Allen S."/>
            <person name="Brook J."/>
            <person name="Brown A.J."/>
            <person name="Brown J.Y."/>
            <person name="Burford D.C."/>
            <person name="Burrill W."/>
            <person name="Burton J."/>
            <person name="Carder C."/>
            <person name="Carter N.P."/>
            <person name="Chapman J.C."/>
            <person name="Clark S.Y."/>
            <person name="Clark G."/>
            <person name="Clee C.M."/>
            <person name="Clegg S."/>
            <person name="Cobley V."/>
            <person name="Collier R.E."/>
            <person name="Collins J.E."/>
            <person name="Colman L.K."/>
            <person name="Corby N.R."/>
            <person name="Coville G.J."/>
            <person name="Culley K.M."/>
            <person name="Dhami P."/>
            <person name="Davies J."/>
            <person name="Dunn M."/>
            <person name="Earthrowl M.E."/>
            <person name="Ellington A.E."/>
            <person name="Evans K.A."/>
            <person name="Faulkner L."/>
            <person name="Francis M.D."/>
            <person name="Frankish A."/>
            <person name="Frankland J."/>
            <person name="French L."/>
            <person name="Garner P."/>
            <person name="Garnett J."/>
            <person name="Ghori M.J."/>
            <person name="Gilby L.M."/>
            <person name="Gillson C.J."/>
            <person name="Glithero R.J."/>
            <person name="Grafham D.V."/>
            <person name="Grant M."/>
            <person name="Gribble S."/>
            <person name="Griffiths C."/>
            <person name="Griffiths M.N.D."/>
            <person name="Hall R."/>
            <person name="Halls K.S."/>
            <person name="Hammond S."/>
            <person name="Harley J.L."/>
            <person name="Hart E.A."/>
            <person name="Heath P.D."/>
            <person name="Heathcott R."/>
            <person name="Holmes S.J."/>
            <person name="Howden P.J."/>
            <person name="Howe K.L."/>
            <person name="Howell G.R."/>
            <person name="Huckle E."/>
            <person name="Humphray S.J."/>
            <person name="Humphries M.D."/>
            <person name="Hunt A.R."/>
            <person name="Johnson C.M."/>
            <person name="Joy A.A."/>
            <person name="Kay M."/>
            <person name="Keenan S.J."/>
            <person name="Kimberley A.M."/>
            <person name="King A."/>
            <person name="Laird G.K."/>
            <person name="Langford C."/>
            <person name="Lawlor S."/>
            <person name="Leongamornlert D.A."/>
            <person name="Leversha M."/>
            <person name="Lloyd C.R."/>
            <person name="Lloyd D.M."/>
            <person name="Loveland J.E."/>
            <person name="Lovell J."/>
            <person name="Martin S."/>
            <person name="Mashreghi-Mohammadi M."/>
            <person name="Maslen G.L."/>
            <person name="Matthews L."/>
            <person name="McCann O.T."/>
            <person name="McLaren S.J."/>
            <person name="McLay K."/>
            <person name="McMurray A."/>
            <person name="Moore M.J.F."/>
            <person name="Mullikin J.C."/>
            <person name="Niblett D."/>
            <person name="Nickerson T."/>
            <person name="Novik K.L."/>
            <person name="Oliver K."/>
            <person name="Overton-Larty E.K."/>
            <person name="Parker A."/>
            <person name="Patel R."/>
            <person name="Pearce A.V."/>
            <person name="Peck A.I."/>
            <person name="Phillimore B.J.C.T."/>
            <person name="Phillips S."/>
            <person name="Plumb R.W."/>
            <person name="Porter K.M."/>
            <person name="Ramsey Y."/>
            <person name="Ranby S.A."/>
            <person name="Rice C.M."/>
            <person name="Ross M.T."/>
            <person name="Searle S.M."/>
            <person name="Sehra H.K."/>
            <person name="Sheridan E."/>
            <person name="Skuce C.D."/>
            <person name="Smith S."/>
            <person name="Smith M."/>
            <person name="Spraggon L."/>
            <person name="Squares S.L."/>
            <person name="Steward C.A."/>
            <person name="Sycamore N."/>
            <person name="Tamlyn-Hall G."/>
            <person name="Tester J."/>
            <person name="Theaker A.J."/>
            <person name="Thomas D.W."/>
            <person name="Thorpe A."/>
            <person name="Tracey A."/>
            <person name="Tromans A."/>
            <person name="Tubby B."/>
            <person name="Wall M."/>
            <person name="Wallis J.M."/>
            <person name="West A.P."/>
            <person name="White S.S."/>
            <person name="Whitehead S.L."/>
            <person name="Whittaker H."/>
            <person name="Wild A."/>
            <person name="Willey D.J."/>
            <person name="Wilmer T.E."/>
            <person name="Wood J.M."/>
            <person name="Wray P.W."/>
            <person name="Wyatt J.C."/>
            <person name="Young L."/>
            <person name="Younger R.M."/>
            <person name="Bentley D.R."/>
            <person name="Coulson A."/>
            <person name="Durbin R.M."/>
            <person name="Hubbard T."/>
            <person name="Sulston J.E."/>
            <person name="Dunham I."/>
            <person name="Rogers J."/>
            <person name="Beck S."/>
        </authorList>
    </citation>
    <scope>NUCLEOTIDE SEQUENCE [LARGE SCALE GENOMIC DNA]</scope>
</reference>
<reference key="5">
    <citation type="submission" date="2005-07" db="EMBL/GenBank/DDBJ databases">
        <authorList>
            <person name="Mural R.J."/>
            <person name="Istrail S."/>
            <person name="Sutton G.G."/>
            <person name="Florea L."/>
            <person name="Halpern A.L."/>
            <person name="Mobarry C.M."/>
            <person name="Lippert R."/>
            <person name="Walenz B."/>
            <person name="Shatkay H."/>
            <person name="Dew I."/>
            <person name="Miller J.R."/>
            <person name="Flanigan M.J."/>
            <person name="Edwards N.J."/>
            <person name="Bolanos R."/>
            <person name="Fasulo D."/>
            <person name="Halldorsson B.V."/>
            <person name="Hannenhalli S."/>
            <person name="Turner R."/>
            <person name="Yooseph S."/>
            <person name="Lu F."/>
            <person name="Nusskern D.R."/>
            <person name="Shue B.C."/>
            <person name="Zheng X.H."/>
            <person name="Zhong F."/>
            <person name="Delcher A.L."/>
            <person name="Huson D.H."/>
            <person name="Kravitz S.A."/>
            <person name="Mouchard L."/>
            <person name="Reinert K."/>
            <person name="Remington K.A."/>
            <person name="Clark A.G."/>
            <person name="Waterman M.S."/>
            <person name="Eichler E.E."/>
            <person name="Adams M.D."/>
            <person name="Hunkapiller M.W."/>
            <person name="Myers E.W."/>
            <person name="Venter J.C."/>
        </authorList>
    </citation>
    <scope>NUCLEOTIDE SEQUENCE [LARGE SCALE GENOMIC DNA]</scope>
</reference>
<comment type="function">
    <text>Inhibits calcineurin-dependent transcriptional responses by binding to the catalytic domain of calcineurin A. Could play a role during central nervous system development.</text>
</comment>
<comment type="alternative products">
    <event type="alternative splicing"/>
    <isoform>
        <id>Q14206-1</id>
        <name>1</name>
        <name>ZAKI-4 alpha</name>
        <sequence type="displayed"/>
    </isoform>
    <isoform>
        <id>Q14206-2</id>
        <name>2</name>
        <name>ZAKI-4 beta</name>
        <sequence type="described" ref="VSP_026923"/>
    </isoform>
</comment>
<comment type="tissue specificity">
    <text>Expressed in fibroblasts, heart, brain, liver, and skeletal muscle but not in placenta, lung, kidney and pancreas.</text>
</comment>
<comment type="induction">
    <text>By thyroid hormone.</text>
</comment>
<comment type="similarity">
    <text evidence="5">Belongs to the RCAN family.</text>
</comment>
<comment type="sequence caution" evidence="5">
    <conflict type="erroneous initiation">
        <sequence resource="EMBL-CDS" id="BAA11911"/>
    </conflict>
</comment>
<dbReference type="EMBL" id="D83407">
    <property type="protein sequence ID" value="BAA11911.1"/>
    <property type="status" value="ALT_INIT"/>
    <property type="molecule type" value="mRNA"/>
</dbReference>
<dbReference type="EMBL" id="AY034085">
    <property type="protein sequence ID" value="AAK59805.1"/>
    <property type="molecule type" value="mRNA"/>
</dbReference>
<dbReference type="EMBL" id="AY034086">
    <property type="protein sequence ID" value="AAK59806.1"/>
    <property type="molecule type" value="mRNA"/>
</dbReference>
<dbReference type="EMBL" id="AK090990">
    <property type="protein sequence ID" value="BAG52258.1"/>
    <property type="molecule type" value="mRNA"/>
</dbReference>
<dbReference type="EMBL" id="AL390741">
    <property type="status" value="NOT_ANNOTATED_CDS"/>
    <property type="molecule type" value="Genomic_DNA"/>
</dbReference>
<dbReference type="EMBL" id="AL359633">
    <property type="status" value="NOT_ANNOTATED_CDS"/>
    <property type="molecule type" value="Genomic_DNA"/>
</dbReference>
<dbReference type="EMBL" id="CH471081">
    <property type="protein sequence ID" value="EAX04294.1"/>
    <property type="molecule type" value="Genomic_DNA"/>
</dbReference>
<dbReference type="CCDS" id="CCDS43469.1">
    <molecule id="Q14206-1"/>
</dbReference>
<dbReference type="CCDS" id="CCDS59023.1">
    <molecule id="Q14206-2"/>
</dbReference>
<dbReference type="RefSeq" id="NP_001238902.1">
    <molecule id="Q14206-2"/>
    <property type="nucleotide sequence ID" value="NM_001251973.2"/>
</dbReference>
<dbReference type="RefSeq" id="NP_001238903.1">
    <molecule id="Q14206-2"/>
    <property type="nucleotide sequence ID" value="NM_001251974.2"/>
</dbReference>
<dbReference type="RefSeq" id="NP_005813.2">
    <molecule id="Q14206-1"/>
    <property type="nucleotide sequence ID" value="NM_005822.4"/>
</dbReference>
<dbReference type="RefSeq" id="XP_011512528.1">
    <molecule id="Q14206-2"/>
    <property type="nucleotide sequence ID" value="XM_011514226.2"/>
</dbReference>
<dbReference type="RefSeq" id="XP_024302069.1">
    <molecule id="Q14206-2"/>
    <property type="nucleotide sequence ID" value="XM_024446301.2"/>
</dbReference>
<dbReference type="RefSeq" id="XP_054209982.1">
    <molecule id="Q14206-2"/>
    <property type="nucleotide sequence ID" value="XM_054354007.1"/>
</dbReference>
<dbReference type="RefSeq" id="XP_054209983.1">
    <molecule id="Q14206-2"/>
    <property type="nucleotide sequence ID" value="XM_054354008.1"/>
</dbReference>
<dbReference type="SMR" id="Q14206"/>
<dbReference type="BioGRID" id="115525">
    <property type="interactions" value="23"/>
</dbReference>
<dbReference type="FunCoup" id="Q14206">
    <property type="interactions" value="436"/>
</dbReference>
<dbReference type="IntAct" id="Q14206">
    <property type="interactions" value="20"/>
</dbReference>
<dbReference type="STRING" id="9606.ENSP00000360425"/>
<dbReference type="GlyGen" id="Q14206">
    <property type="glycosylation" value="1 site"/>
</dbReference>
<dbReference type="PhosphoSitePlus" id="Q14206"/>
<dbReference type="BioMuta" id="RCAN2"/>
<dbReference type="DMDM" id="158958336"/>
<dbReference type="MassIVE" id="Q14206"/>
<dbReference type="PaxDb" id="9606-ENSP00000360425"/>
<dbReference type="PeptideAtlas" id="Q14206"/>
<dbReference type="ProteomicsDB" id="59928">
    <molecule id="Q14206-1"/>
</dbReference>
<dbReference type="ProteomicsDB" id="59929">
    <molecule id="Q14206-2"/>
</dbReference>
<dbReference type="Antibodypedia" id="30708">
    <property type="antibodies" value="231 antibodies from 30 providers"/>
</dbReference>
<dbReference type="DNASU" id="10231"/>
<dbReference type="Ensembl" id="ENST00000306764.11">
    <molecule id="Q14206-2"/>
    <property type="protein sequence ID" value="ENSP00000305223.7"/>
    <property type="gene ID" value="ENSG00000172348.16"/>
</dbReference>
<dbReference type="Ensembl" id="ENST00000330430.10">
    <molecule id="Q14206-1"/>
    <property type="protein sequence ID" value="ENSP00000329454.6"/>
    <property type="gene ID" value="ENSG00000172348.16"/>
</dbReference>
<dbReference type="Ensembl" id="ENST00000371374.6">
    <molecule id="Q14206-2"/>
    <property type="protein sequence ID" value="ENSP00000360425.1"/>
    <property type="gene ID" value="ENSG00000172348.16"/>
</dbReference>
<dbReference type="GeneID" id="10231"/>
<dbReference type="KEGG" id="hsa:10231"/>
<dbReference type="MANE-Select" id="ENST00000371374.6">
    <molecule id="Q14206-2"/>
    <property type="protein sequence ID" value="ENSP00000360425.1"/>
    <property type="RefSeq nucleotide sequence ID" value="NM_001251974.2"/>
    <property type="RefSeq protein sequence ID" value="NP_001238903.1"/>
</dbReference>
<dbReference type="UCSC" id="uc003oyb.3">
    <molecule id="Q14206-1"/>
    <property type="organism name" value="human"/>
</dbReference>
<dbReference type="AGR" id="HGNC:3041"/>
<dbReference type="CTD" id="10231"/>
<dbReference type="DisGeNET" id="10231"/>
<dbReference type="GeneCards" id="RCAN2"/>
<dbReference type="HGNC" id="HGNC:3041">
    <property type="gene designation" value="RCAN2"/>
</dbReference>
<dbReference type="HPA" id="ENSG00000172348">
    <property type="expression patterns" value="Tissue enhanced (heart muscle, tongue)"/>
</dbReference>
<dbReference type="MIM" id="604876">
    <property type="type" value="gene"/>
</dbReference>
<dbReference type="neXtProt" id="NX_Q14206"/>
<dbReference type="OpenTargets" id="ENSG00000172348"/>
<dbReference type="PharmGKB" id="PA162400959"/>
<dbReference type="VEuPathDB" id="HostDB:ENSG00000172348"/>
<dbReference type="eggNOG" id="KOG4019">
    <property type="taxonomic scope" value="Eukaryota"/>
</dbReference>
<dbReference type="GeneTree" id="ENSGT00940000159767"/>
<dbReference type="HOGENOM" id="CLU_076190_2_1_1"/>
<dbReference type="InParanoid" id="Q14206"/>
<dbReference type="OMA" id="ESGCHFD"/>
<dbReference type="OrthoDB" id="17212at2759"/>
<dbReference type="PAN-GO" id="Q14206">
    <property type="GO annotations" value="4 GO annotations based on evolutionary models"/>
</dbReference>
<dbReference type="PhylomeDB" id="Q14206"/>
<dbReference type="TreeFam" id="TF313579"/>
<dbReference type="PathwayCommons" id="Q14206"/>
<dbReference type="SignaLink" id="Q14206"/>
<dbReference type="BioGRID-ORCS" id="10231">
    <property type="hits" value="14 hits in 1145 CRISPR screens"/>
</dbReference>
<dbReference type="ChiTaRS" id="RCAN2">
    <property type="organism name" value="human"/>
</dbReference>
<dbReference type="GeneWiki" id="RCAN2"/>
<dbReference type="GenomeRNAi" id="10231"/>
<dbReference type="Pharos" id="Q14206">
    <property type="development level" value="Tbio"/>
</dbReference>
<dbReference type="PRO" id="PR:Q14206"/>
<dbReference type="Proteomes" id="UP000005640">
    <property type="component" value="Chromosome 6"/>
</dbReference>
<dbReference type="RNAct" id="Q14206">
    <property type="molecule type" value="protein"/>
</dbReference>
<dbReference type="Bgee" id="ENSG00000172348">
    <property type="expression patterns" value="Expressed in lateral nuclear group of thalamus and 197 other cell types or tissues"/>
</dbReference>
<dbReference type="ExpressionAtlas" id="Q14206">
    <property type="expression patterns" value="baseline and differential"/>
</dbReference>
<dbReference type="GO" id="GO:0005737">
    <property type="term" value="C:cytoplasm"/>
    <property type="evidence" value="ECO:0000318"/>
    <property type="project" value="GO_Central"/>
</dbReference>
<dbReference type="GO" id="GO:0005634">
    <property type="term" value="C:nucleus"/>
    <property type="evidence" value="ECO:0000318"/>
    <property type="project" value="GO_Central"/>
</dbReference>
<dbReference type="GO" id="GO:0008597">
    <property type="term" value="F:calcium-dependent protein serine/threonine phosphatase regulator activity"/>
    <property type="evidence" value="ECO:0000318"/>
    <property type="project" value="GO_Central"/>
</dbReference>
<dbReference type="GO" id="GO:0003676">
    <property type="term" value="F:nucleic acid binding"/>
    <property type="evidence" value="ECO:0007669"/>
    <property type="project" value="InterPro"/>
</dbReference>
<dbReference type="GO" id="GO:0033173">
    <property type="term" value="P:calcineurin-NFAT signaling cascade"/>
    <property type="evidence" value="ECO:0007669"/>
    <property type="project" value="Ensembl"/>
</dbReference>
<dbReference type="GO" id="GO:0019722">
    <property type="term" value="P:calcium-mediated signaling"/>
    <property type="evidence" value="ECO:0000318"/>
    <property type="project" value="GO_Central"/>
</dbReference>
<dbReference type="GO" id="GO:0031987">
    <property type="term" value="P:locomotion involved in locomotory behavior"/>
    <property type="evidence" value="ECO:0007669"/>
    <property type="project" value="Ensembl"/>
</dbReference>
<dbReference type="GO" id="GO:0007219">
    <property type="term" value="P:Notch signaling pathway"/>
    <property type="evidence" value="ECO:0007669"/>
    <property type="project" value="Ensembl"/>
</dbReference>
<dbReference type="GO" id="GO:0006979">
    <property type="term" value="P:response to oxidative stress"/>
    <property type="evidence" value="ECO:0007669"/>
    <property type="project" value="Ensembl"/>
</dbReference>
<dbReference type="GO" id="GO:0007614">
    <property type="term" value="P:short-term memory"/>
    <property type="evidence" value="ECO:0007669"/>
    <property type="project" value="Ensembl"/>
</dbReference>
<dbReference type="CDD" id="cd12709">
    <property type="entry name" value="RRM_RCAN2"/>
    <property type="match status" value="1"/>
</dbReference>
<dbReference type="FunFam" id="3.30.70.330:FF:000092">
    <property type="entry name" value="Calcipressin-2 isoform 2"/>
    <property type="match status" value="1"/>
</dbReference>
<dbReference type="Gene3D" id="3.30.70.330">
    <property type="match status" value="1"/>
</dbReference>
<dbReference type="InterPro" id="IPR006931">
    <property type="entry name" value="Calcipressin"/>
</dbReference>
<dbReference type="InterPro" id="IPR012677">
    <property type="entry name" value="Nucleotide-bd_a/b_plait_sf"/>
</dbReference>
<dbReference type="InterPro" id="IPR035979">
    <property type="entry name" value="RBD_domain_sf"/>
</dbReference>
<dbReference type="InterPro" id="IPR034919">
    <property type="entry name" value="RCAN2_RRM"/>
</dbReference>
<dbReference type="PANTHER" id="PTHR10300">
    <property type="entry name" value="CALCIPRESSIN"/>
    <property type="match status" value="1"/>
</dbReference>
<dbReference type="PANTHER" id="PTHR10300:SF5">
    <property type="entry name" value="CALCIPRESSIN-2"/>
    <property type="match status" value="1"/>
</dbReference>
<dbReference type="Pfam" id="PF04847">
    <property type="entry name" value="Calcipressin"/>
    <property type="match status" value="1"/>
</dbReference>
<dbReference type="SUPFAM" id="SSF54928">
    <property type="entry name" value="RNA-binding domain, RBD"/>
    <property type="match status" value="1"/>
</dbReference>
<protein>
    <recommendedName>
        <fullName>Calcipressin-2</fullName>
    </recommendedName>
    <alternativeName>
        <fullName>Down syndrome candidate region 1-like 1</fullName>
    </alternativeName>
    <alternativeName>
        <fullName>Myocyte-enriched calcineurin-interacting protein 2</fullName>
        <shortName>MCIP2</shortName>
    </alternativeName>
    <alternativeName>
        <fullName>Regulator of calcineurin 2</fullName>
    </alternativeName>
    <alternativeName>
        <fullName>Thyroid hormone-responsive protein ZAKI-4</fullName>
    </alternativeName>
</protein>
<sequence length="197" mass="21997">MPAPSMDCDVSTLVACVVDVEVFTNQEVKEKFEGLFRTYDDCVTFQLFKSFRRVRINFSNPKSAARARIELHETQFRGKKLKLYFAQVQTPETDGDKLHLAPPQPAKQFLISPPSSPPVGWQPINDATPVLNYDLLYAVAKLGPGEKYELHAGTESTPSVVVHVCDSDIEEEEDPKTSPKPKIIQTRRPGLPPSVSN</sequence>
<feature type="chain" id="PRO_0000211417" description="Calcipressin-2">
    <location>
        <begin position="1"/>
        <end position="197"/>
    </location>
</feature>
<feature type="region of interest" description="Disordered" evidence="2">
    <location>
        <begin position="166"/>
        <end position="197"/>
    </location>
</feature>
<feature type="modified residue" description="Phosphoserine" evidence="1">
    <location>
        <position position="167"/>
    </location>
</feature>
<feature type="splice variant" id="VSP_026923" description="In isoform 2." evidence="3 4">
    <original>MPAPSMDCDVSTLVACVVDVEVFTNQEV</original>
    <variation>MRGESYFIGMRSPGQQGHVPEDGGLFLLCCIDRDWAVTRCFAEEAFQAITDFNDLPNSLFACNVHQSVFEGEES</variation>
    <location>
        <begin position="1"/>
        <end position="28"/>
    </location>
</feature>
<feature type="sequence conflict" description="In Ref. 1; BAA11911 and 2; AAK59805/AAK59806." evidence="5" ref="1 2">
    <original>E</original>
    <variation>G</variation>
    <location>
        <position position="33"/>
    </location>
</feature>
<feature type="sequence conflict" description="In Ref. 1; BAA11911 and 2; AAK59805/AAK59806." evidence="5" ref="1 2">
    <original>G</original>
    <variation>S</variation>
    <location>
        <position position="120"/>
    </location>
</feature>
<accession>Q14206</accession>
<accession>A6ND07</accession>
<accession>B3KR46</accession>
<accession>Q5VWF7</accession>
<accession>Q5VWF8</accession>
<accession>Q8N116</accession>
<organism>
    <name type="scientific">Homo sapiens</name>
    <name type="common">Human</name>
    <dbReference type="NCBI Taxonomy" id="9606"/>
    <lineage>
        <taxon>Eukaryota</taxon>
        <taxon>Metazoa</taxon>
        <taxon>Chordata</taxon>
        <taxon>Craniata</taxon>
        <taxon>Vertebrata</taxon>
        <taxon>Euteleostomi</taxon>
        <taxon>Mammalia</taxon>
        <taxon>Eutheria</taxon>
        <taxon>Euarchontoglires</taxon>
        <taxon>Primates</taxon>
        <taxon>Haplorrhini</taxon>
        <taxon>Catarrhini</taxon>
        <taxon>Hominidae</taxon>
        <taxon>Homo</taxon>
    </lineage>
</organism>